<proteinExistence type="inferred from homology"/>
<evidence type="ECO:0000255" key="1">
    <source>
        <dbReference type="HAMAP-Rule" id="MF_00148"/>
    </source>
</evidence>
<accession>Q65DN9</accession>
<accession>Q62P62</accession>
<keyword id="KW-0963">Cytoplasm</keyword>
<keyword id="KW-0227">DNA damage</keyword>
<keyword id="KW-0234">DNA repair</keyword>
<keyword id="KW-0378">Hydrolase</keyword>
<keyword id="KW-1185">Reference proteome</keyword>
<sequence length="225" mass="25873">MKQILNDSWWQQLKDEFDKPYYQELREMLKREYAEHTVYPEPNDIYNALHYTSYENVKVVILGQDPYHGPGQAHGLSFSVQPGVNPPPSLKNIFIELQNDIGADIPNHGSLVSWAKQGVLLLNTVLTVRRGQANSHKGKGWEQLTDSIIDVLNKRDKPVVFILWGRHAQMKKERIDTSKHFIIQSPHPSPFSARNGFFGSRPFSRANQYLEQIGDEPIDWSLPNL</sequence>
<protein>
    <recommendedName>
        <fullName evidence="1">Uracil-DNA glycosylase</fullName>
        <shortName evidence="1">UDG</shortName>
        <ecNumber evidence="1">3.2.2.27</ecNumber>
    </recommendedName>
</protein>
<comment type="function">
    <text evidence="1">Excises uracil residues from the DNA which can arise as a result of misincorporation of dUMP residues by DNA polymerase or due to deamination of cytosine.</text>
</comment>
<comment type="catalytic activity">
    <reaction evidence="1">
        <text>Hydrolyzes single-stranded DNA or mismatched double-stranded DNA and polynucleotides, releasing free uracil.</text>
        <dbReference type="EC" id="3.2.2.27"/>
    </reaction>
</comment>
<comment type="subcellular location">
    <subcellularLocation>
        <location evidence="1">Cytoplasm</location>
    </subcellularLocation>
</comment>
<comment type="similarity">
    <text evidence="1">Belongs to the uracil-DNA glycosylase (UDG) superfamily. UNG family.</text>
</comment>
<reference key="1">
    <citation type="journal article" date="2004" name="J. Mol. Microbiol. Biotechnol.">
        <title>The complete genome sequence of Bacillus licheniformis DSM13, an organism with great industrial potential.</title>
        <authorList>
            <person name="Veith B."/>
            <person name="Herzberg C."/>
            <person name="Steckel S."/>
            <person name="Feesche J."/>
            <person name="Maurer K.H."/>
            <person name="Ehrenreich P."/>
            <person name="Baeumer S."/>
            <person name="Henne A."/>
            <person name="Liesegang H."/>
            <person name="Merkl R."/>
            <person name="Ehrenreich A."/>
            <person name="Gottschalk G."/>
        </authorList>
    </citation>
    <scope>NUCLEOTIDE SEQUENCE [LARGE SCALE GENOMIC DNA]</scope>
    <source>
        <strain>ATCC 14580 / DSM 13 / JCM 2505 / CCUG 7422 / NBRC 12200 / NCIMB 9375 / NCTC 10341 / NRRL NRS-1264 / Gibson 46</strain>
    </source>
</reference>
<reference key="2">
    <citation type="journal article" date="2004" name="Genome Biol.">
        <title>Complete genome sequence of the industrial bacterium Bacillus licheniformis and comparisons with closely related Bacillus species.</title>
        <authorList>
            <person name="Rey M.W."/>
            <person name="Ramaiya P."/>
            <person name="Nelson B.A."/>
            <person name="Brody-Karpin S.D."/>
            <person name="Zaretsky E.J."/>
            <person name="Tang M."/>
            <person name="Lopez de Leon A."/>
            <person name="Xiang H."/>
            <person name="Gusti V."/>
            <person name="Clausen I.G."/>
            <person name="Olsen P.B."/>
            <person name="Rasmussen M.D."/>
            <person name="Andersen J.T."/>
            <person name="Joergensen P.L."/>
            <person name="Larsen T.S."/>
            <person name="Sorokin A."/>
            <person name="Bolotin A."/>
            <person name="Lapidus A."/>
            <person name="Galleron N."/>
            <person name="Ehrlich S.D."/>
            <person name="Berka R.M."/>
        </authorList>
    </citation>
    <scope>NUCLEOTIDE SEQUENCE [LARGE SCALE GENOMIC DNA]</scope>
    <source>
        <strain>ATCC 14580 / DSM 13 / JCM 2505 / CCUG 7422 / NBRC 12200 / NCIMB 9375 / NCTC 10341 / NRRL NRS-1264 / Gibson 46</strain>
    </source>
</reference>
<gene>
    <name evidence="1" type="primary">ung</name>
    <name type="ordered locus">BLi04012</name>
    <name type="ordered locus">BL03895</name>
</gene>
<feature type="chain" id="PRO_0000176065" description="Uracil-DNA glycosylase">
    <location>
        <begin position="1"/>
        <end position="225"/>
    </location>
</feature>
<feature type="active site" description="Proton acceptor" evidence="1">
    <location>
        <position position="65"/>
    </location>
</feature>
<name>UNG_BACLD</name>
<organism>
    <name type="scientific">Bacillus licheniformis (strain ATCC 14580 / DSM 13 / JCM 2505 / CCUG 7422 / NBRC 12200 / NCIMB 9375 / NCTC 10341 / NRRL NRS-1264 / Gibson 46)</name>
    <dbReference type="NCBI Taxonomy" id="279010"/>
    <lineage>
        <taxon>Bacteria</taxon>
        <taxon>Bacillati</taxon>
        <taxon>Bacillota</taxon>
        <taxon>Bacilli</taxon>
        <taxon>Bacillales</taxon>
        <taxon>Bacillaceae</taxon>
        <taxon>Bacillus</taxon>
    </lineage>
</organism>
<dbReference type="EC" id="3.2.2.27" evidence="1"/>
<dbReference type="EMBL" id="AE017333">
    <property type="protein sequence ID" value="AAU42825.1"/>
    <property type="molecule type" value="Genomic_DNA"/>
</dbReference>
<dbReference type="EMBL" id="CP000002">
    <property type="protein sequence ID" value="AAU25449.1"/>
    <property type="molecule type" value="Genomic_DNA"/>
</dbReference>
<dbReference type="RefSeq" id="WP_003186145.1">
    <property type="nucleotide sequence ID" value="NC_006322.1"/>
</dbReference>
<dbReference type="SMR" id="Q65DN9"/>
<dbReference type="STRING" id="279010.BL03895"/>
<dbReference type="KEGG" id="bld:BLi04012"/>
<dbReference type="KEGG" id="bli:BL03895"/>
<dbReference type="eggNOG" id="COG0692">
    <property type="taxonomic scope" value="Bacteria"/>
</dbReference>
<dbReference type="HOGENOM" id="CLU_032162_3_0_9"/>
<dbReference type="Proteomes" id="UP000000606">
    <property type="component" value="Chromosome"/>
</dbReference>
<dbReference type="GO" id="GO:0005737">
    <property type="term" value="C:cytoplasm"/>
    <property type="evidence" value="ECO:0007669"/>
    <property type="project" value="UniProtKB-SubCell"/>
</dbReference>
<dbReference type="GO" id="GO:0004844">
    <property type="term" value="F:uracil DNA N-glycosylase activity"/>
    <property type="evidence" value="ECO:0007669"/>
    <property type="project" value="UniProtKB-UniRule"/>
</dbReference>
<dbReference type="GO" id="GO:0097510">
    <property type="term" value="P:base-excision repair, AP site formation via deaminated base removal"/>
    <property type="evidence" value="ECO:0007669"/>
    <property type="project" value="TreeGrafter"/>
</dbReference>
<dbReference type="CDD" id="cd10027">
    <property type="entry name" value="UDG-F1-like"/>
    <property type="match status" value="1"/>
</dbReference>
<dbReference type="FunFam" id="3.40.470.10:FF:000001">
    <property type="entry name" value="Uracil-DNA glycosylase"/>
    <property type="match status" value="1"/>
</dbReference>
<dbReference type="Gene3D" id="3.40.470.10">
    <property type="entry name" value="Uracil-DNA glycosylase-like domain"/>
    <property type="match status" value="1"/>
</dbReference>
<dbReference type="HAMAP" id="MF_00148">
    <property type="entry name" value="UDG"/>
    <property type="match status" value="1"/>
</dbReference>
<dbReference type="InterPro" id="IPR002043">
    <property type="entry name" value="UDG_fam1"/>
</dbReference>
<dbReference type="InterPro" id="IPR018085">
    <property type="entry name" value="Ura-DNA_Glyclase_AS"/>
</dbReference>
<dbReference type="InterPro" id="IPR005122">
    <property type="entry name" value="Uracil-DNA_glycosylase-like"/>
</dbReference>
<dbReference type="InterPro" id="IPR036895">
    <property type="entry name" value="Uracil-DNA_glycosylase-like_sf"/>
</dbReference>
<dbReference type="NCBIfam" id="NF003588">
    <property type="entry name" value="PRK05254.1-1"/>
    <property type="match status" value="1"/>
</dbReference>
<dbReference type="NCBIfam" id="NF003589">
    <property type="entry name" value="PRK05254.1-2"/>
    <property type="match status" value="1"/>
</dbReference>
<dbReference type="NCBIfam" id="NF003591">
    <property type="entry name" value="PRK05254.1-4"/>
    <property type="match status" value="1"/>
</dbReference>
<dbReference type="NCBIfam" id="NF003592">
    <property type="entry name" value="PRK05254.1-5"/>
    <property type="match status" value="1"/>
</dbReference>
<dbReference type="NCBIfam" id="TIGR00628">
    <property type="entry name" value="ung"/>
    <property type="match status" value="1"/>
</dbReference>
<dbReference type="PANTHER" id="PTHR11264">
    <property type="entry name" value="URACIL-DNA GLYCOSYLASE"/>
    <property type="match status" value="1"/>
</dbReference>
<dbReference type="PANTHER" id="PTHR11264:SF0">
    <property type="entry name" value="URACIL-DNA GLYCOSYLASE"/>
    <property type="match status" value="1"/>
</dbReference>
<dbReference type="Pfam" id="PF03167">
    <property type="entry name" value="UDG"/>
    <property type="match status" value="1"/>
</dbReference>
<dbReference type="SMART" id="SM00986">
    <property type="entry name" value="UDG"/>
    <property type="match status" value="1"/>
</dbReference>
<dbReference type="SMART" id="SM00987">
    <property type="entry name" value="UreE_C"/>
    <property type="match status" value="1"/>
</dbReference>
<dbReference type="SUPFAM" id="SSF52141">
    <property type="entry name" value="Uracil-DNA glycosylase-like"/>
    <property type="match status" value="1"/>
</dbReference>
<dbReference type="PROSITE" id="PS00130">
    <property type="entry name" value="U_DNA_GLYCOSYLASE"/>
    <property type="match status" value="1"/>
</dbReference>